<organism>
    <name type="scientific">Actinobacillus pleuropneumoniae serotype 5b (strain L20)</name>
    <dbReference type="NCBI Taxonomy" id="416269"/>
    <lineage>
        <taxon>Bacteria</taxon>
        <taxon>Pseudomonadati</taxon>
        <taxon>Pseudomonadota</taxon>
        <taxon>Gammaproteobacteria</taxon>
        <taxon>Pasteurellales</taxon>
        <taxon>Pasteurellaceae</taxon>
        <taxon>Actinobacillus</taxon>
    </lineage>
</organism>
<comment type="function">
    <text evidence="1">DNA-dependent RNA polymerase catalyzes the transcription of DNA into RNA using the four ribonucleoside triphosphates as substrates.</text>
</comment>
<comment type="catalytic activity">
    <reaction evidence="1">
        <text>RNA(n) + a ribonucleoside 5'-triphosphate = RNA(n+1) + diphosphate</text>
        <dbReference type="Rhea" id="RHEA:21248"/>
        <dbReference type="Rhea" id="RHEA-COMP:14527"/>
        <dbReference type="Rhea" id="RHEA-COMP:17342"/>
        <dbReference type="ChEBI" id="CHEBI:33019"/>
        <dbReference type="ChEBI" id="CHEBI:61557"/>
        <dbReference type="ChEBI" id="CHEBI:140395"/>
        <dbReference type="EC" id="2.7.7.6"/>
    </reaction>
</comment>
<comment type="subunit">
    <text evidence="1">The RNAP catalytic core consists of 2 alpha, 1 beta, 1 beta' and 1 omega subunit. When a sigma factor is associated with the core the holoenzyme is formed, which can initiate transcription.</text>
</comment>
<comment type="similarity">
    <text evidence="1">Belongs to the RNA polymerase beta chain family.</text>
</comment>
<evidence type="ECO:0000255" key="1">
    <source>
        <dbReference type="HAMAP-Rule" id="MF_01321"/>
    </source>
</evidence>
<name>RPOB_ACTP2</name>
<reference key="1">
    <citation type="journal article" date="2008" name="J. Bacteriol.">
        <title>The complete genome sequence of Actinobacillus pleuropneumoniae L20 (serotype 5b).</title>
        <authorList>
            <person name="Foote S.J."/>
            <person name="Bosse J.T."/>
            <person name="Bouevitch A.B."/>
            <person name="Langford P.R."/>
            <person name="Young N.M."/>
            <person name="Nash J.H.E."/>
        </authorList>
    </citation>
    <scope>NUCLEOTIDE SEQUENCE [LARGE SCALE GENOMIC DNA]</scope>
    <source>
        <strain>L20</strain>
    </source>
</reference>
<feature type="chain" id="PRO_0000300272" description="DNA-directed RNA polymerase subunit beta">
    <location>
        <begin position="1"/>
        <end position="1342"/>
    </location>
</feature>
<sequence length="1342" mass="149710">MAYSYSEKKRIRKSFGKRPQVLNVPYLLTIQLDSYEKFIQRDSDGQQGLEAAFRSVFPIVSNNGSTELQYVSYELGEPVFDVRECQIRGTTYAAPLRVKLRLVTFDREAAAGTVKDIKEQNVYMGEIPLMTDNGTFVINGTERVIVSQLHRSPGVFFDSDKGKTHSSGKVLYNARIIPYRGSWLDFEFDPKDNLYARIDRRRKLPATIILRALGYTTEEILSMFFDKVNFEIQDNKLLMTLVPERLRGETAAFDIEANGKVYVERGRRITARHIRTLEKDGITQIEVPVEYIVGKVAAKDYVDLSTGEVVCPANMEISMEMLAKLSQAGYKEIEVLFTNDLDHGPYISETLRVDPTYDRLSALVEIYRMMRPGEPPTKEAAEALFDNMFFSADRYDLSAVGRMKFNRSLNLEEGVGSGILSNDDITGVMKKLIEIRNGRGEVDDIDHLGNRRIRSVGEMAENQFRIGLVRVERAVRERLSLGDLDGITPQDLINAKPISAAVKEFFGSSQLSQFMDQNNPLSEVTHKRRISALGPGGLTRERAGFEVRDVHTTHYGRLCPIETPEGPNIGLINSLSVYARTNNYGFLETPFRKVVNGQVTEDIEYLSAIEEGNYVIAQANSNLDENFRFTDTYVTCRGEHGESGLYKPEDIHYMDISTQQVVSVAAALIPFLEHDDANRALMGANMQRQAVPTLRADKPLVGTGMEKPIALDSGVAIVAKRGGIVQRVDASRIVVKVNEDETIPGEAGIDIYNLIKYTRSNQNTCINQIPCVNLGEPVARGEILADGPSTDLGELALGQNIRVAFMPWNGYNFEDSMLVSERVVQEDRFTTIHIQELSCVARDTKLGAEEITADIPNVGESALSKLDESGIVYVGAEVKGGDILVGKVTPKGETQLTPEEKLLRAIFGEKASDVKDSSLRVPNGTSGTVIDVQVFTRDGVEKDKRALEIEEMQLKEAKKDLTEELEILEAGLFTRVRNLLIEGGVSEAELDKVAREKWLEQTLDDEAKQNQLEQLAEQHEELRKEFERKLEIKRNKIIQGDDLAPGVLKVVKVYLAVRRQIQPGDKMAGRHGNKGVISKINPVEDMPYDENGQPVEIVLNPLGVPSRMNIGQILETHLGLAAKGIGDQINAMIKQQQSVAKLREYIQKAYDLGHGSQSVDLSTFTDEEVMRLAENLRKGLPLATPVFDGAHESEIKGLLELGGLPTSGQITLFDGRTGEKFERPVTVGYMYMLKLNHLVDDKMHARSTGSYSLVTQQPLGGKAQFGGQRFGEMEVWALEAYGAAYTLQEMLTVKSDDVNGRTKMYKNIVDGTHQMEPGMPESFNVLLKEIRALGIDMELDEE</sequence>
<accession>A3N325</accession>
<keyword id="KW-0240">DNA-directed RNA polymerase</keyword>
<keyword id="KW-0548">Nucleotidyltransferase</keyword>
<keyword id="KW-1185">Reference proteome</keyword>
<keyword id="KW-0804">Transcription</keyword>
<keyword id="KW-0808">Transferase</keyword>
<dbReference type="EC" id="2.7.7.6" evidence="1"/>
<dbReference type="EMBL" id="CP000569">
    <property type="protein sequence ID" value="ABN74811.1"/>
    <property type="molecule type" value="Genomic_DNA"/>
</dbReference>
<dbReference type="RefSeq" id="WP_005613296.1">
    <property type="nucleotide sequence ID" value="NC_009053.1"/>
</dbReference>
<dbReference type="SMR" id="A3N325"/>
<dbReference type="STRING" id="416269.APL_1727"/>
<dbReference type="EnsemblBacteria" id="ABN74811">
    <property type="protein sequence ID" value="ABN74811"/>
    <property type="gene ID" value="APL_1727"/>
</dbReference>
<dbReference type="KEGG" id="apl:APL_1727"/>
<dbReference type="eggNOG" id="COG0085">
    <property type="taxonomic scope" value="Bacteria"/>
</dbReference>
<dbReference type="HOGENOM" id="CLU_000524_4_0_6"/>
<dbReference type="Proteomes" id="UP000001432">
    <property type="component" value="Chromosome"/>
</dbReference>
<dbReference type="GO" id="GO:0000428">
    <property type="term" value="C:DNA-directed RNA polymerase complex"/>
    <property type="evidence" value="ECO:0007669"/>
    <property type="project" value="UniProtKB-KW"/>
</dbReference>
<dbReference type="GO" id="GO:0003677">
    <property type="term" value="F:DNA binding"/>
    <property type="evidence" value="ECO:0007669"/>
    <property type="project" value="UniProtKB-UniRule"/>
</dbReference>
<dbReference type="GO" id="GO:0003899">
    <property type="term" value="F:DNA-directed RNA polymerase activity"/>
    <property type="evidence" value="ECO:0007669"/>
    <property type="project" value="UniProtKB-UniRule"/>
</dbReference>
<dbReference type="GO" id="GO:0032549">
    <property type="term" value="F:ribonucleoside binding"/>
    <property type="evidence" value="ECO:0007669"/>
    <property type="project" value="InterPro"/>
</dbReference>
<dbReference type="GO" id="GO:0006351">
    <property type="term" value="P:DNA-templated transcription"/>
    <property type="evidence" value="ECO:0007669"/>
    <property type="project" value="UniProtKB-UniRule"/>
</dbReference>
<dbReference type="CDD" id="cd00653">
    <property type="entry name" value="RNA_pol_B_RPB2"/>
    <property type="match status" value="1"/>
</dbReference>
<dbReference type="FunFam" id="2.40.270.10:FF:000003">
    <property type="entry name" value="DNA-directed RNA polymerase subunit beta"/>
    <property type="match status" value="1"/>
</dbReference>
<dbReference type="FunFam" id="2.40.270.10:FF:000004">
    <property type="entry name" value="DNA-directed RNA polymerase subunit beta"/>
    <property type="match status" value="1"/>
</dbReference>
<dbReference type="FunFam" id="2.40.50.100:FF:000006">
    <property type="entry name" value="DNA-directed RNA polymerase subunit beta"/>
    <property type="match status" value="1"/>
</dbReference>
<dbReference type="FunFam" id="2.40.50.150:FF:000001">
    <property type="entry name" value="DNA-directed RNA polymerase subunit beta"/>
    <property type="match status" value="1"/>
</dbReference>
<dbReference type="FunFam" id="3.90.1100.10:FF:000002">
    <property type="entry name" value="DNA-directed RNA polymerase subunit beta"/>
    <property type="match status" value="1"/>
</dbReference>
<dbReference type="FunFam" id="3.90.1110.10:FF:000001">
    <property type="entry name" value="DNA-directed RNA polymerase subunit beta"/>
    <property type="match status" value="1"/>
</dbReference>
<dbReference type="FunFam" id="3.90.1110.10:FF:000004">
    <property type="entry name" value="DNA-directed RNA polymerase subunit beta"/>
    <property type="match status" value="1"/>
</dbReference>
<dbReference type="FunFam" id="3.90.1800.10:FF:000001">
    <property type="entry name" value="DNA-directed RNA polymerase subunit beta"/>
    <property type="match status" value="1"/>
</dbReference>
<dbReference type="Gene3D" id="2.40.50.100">
    <property type="match status" value="1"/>
</dbReference>
<dbReference type="Gene3D" id="2.40.50.150">
    <property type="match status" value="1"/>
</dbReference>
<dbReference type="Gene3D" id="3.90.1100.10">
    <property type="match status" value="2"/>
</dbReference>
<dbReference type="Gene3D" id="2.30.150.10">
    <property type="entry name" value="DNA-directed RNA polymerase, beta subunit, external 1 domain"/>
    <property type="match status" value="1"/>
</dbReference>
<dbReference type="Gene3D" id="2.40.270.10">
    <property type="entry name" value="DNA-directed RNA polymerase, subunit 2, domain 6"/>
    <property type="match status" value="1"/>
</dbReference>
<dbReference type="Gene3D" id="3.90.1800.10">
    <property type="entry name" value="RNA polymerase alpha subunit dimerisation domain"/>
    <property type="match status" value="1"/>
</dbReference>
<dbReference type="Gene3D" id="3.90.1110.10">
    <property type="entry name" value="RNA polymerase Rpb2, domain 2"/>
    <property type="match status" value="1"/>
</dbReference>
<dbReference type="HAMAP" id="MF_01321">
    <property type="entry name" value="RNApol_bact_RpoB"/>
    <property type="match status" value="1"/>
</dbReference>
<dbReference type="InterPro" id="IPR042107">
    <property type="entry name" value="DNA-dir_RNA_pol_bsu_ext_1_sf"/>
</dbReference>
<dbReference type="InterPro" id="IPR019462">
    <property type="entry name" value="DNA-dir_RNA_pol_bsu_external_1"/>
</dbReference>
<dbReference type="InterPro" id="IPR015712">
    <property type="entry name" value="DNA-dir_RNA_pol_su2"/>
</dbReference>
<dbReference type="InterPro" id="IPR007120">
    <property type="entry name" value="DNA-dir_RNAP_su2_dom"/>
</dbReference>
<dbReference type="InterPro" id="IPR037033">
    <property type="entry name" value="DNA-dir_RNAP_su2_hyb_sf"/>
</dbReference>
<dbReference type="InterPro" id="IPR010243">
    <property type="entry name" value="RNA_pol_bsu_bac"/>
</dbReference>
<dbReference type="InterPro" id="IPR007121">
    <property type="entry name" value="RNA_pol_bsu_CS"/>
</dbReference>
<dbReference type="InterPro" id="IPR007644">
    <property type="entry name" value="RNA_pol_bsu_protrusion"/>
</dbReference>
<dbReference type="InterPro" id="IPR007642">
    <property type="entry name" value="RNA_pol_Rpb2_2"/>
</dbReference>
<dbReference type="InterPro" id="IPR037034">
    <property type="entry name" value="RNA_pol_Rpb2_2_sf"/>
</dbReference>
<dbReference type="InterPro" id="IPR007645">
    <property type="entry name" value="RNA_pol_Rpb2_3"/>
</dbReference>
<dbReference type="InterPro" id="IPR007641">
    <property type="entry name" value="RNA_pol_Rpb2_7"/>
</dbReference>
<dbReference type="InterPro" id="IPR014724">
    <property type="entry name" value="RNA_pol_RPB2_OB-fold"/>
</dbReference>
<dbReference type="NCBIfam" id="NF001616">
    <property type="entry name" value="PRK00405.1"/>
    <property type="match status" value="1"/>
</dbReference>
<dbReference type="NCBIfam" id="TIGR02013">
    <property type="entry name" value="rpoB"/>
    <property type="match status" value="1"/>
</dbReference>
<dbReference type="PANTHER" id="PTHR20856">
    <property type="entry name" value="DNA-DIRECTED RNA POLYMERASE I SUBUNIT 2"/>
    <property type="match status" value="1"/>
</dbReference>
<dbReference type="Pfam" id="PF04563">
    <property type="entry name" value="RNA_pol_Rpb2_1"/>
    <property type="match status" value="1"/>
</dbReference>
<dbReference type="Pfam" id="PF04561">
    <property type="entry name" value="RNA_pol_Rpb2_2"/>
    <property type="match status" value="2"/>
</dbReference>
<dbReference type="Pfam" id="PF04565">
    <property type="entry name" value="RNA_pol_Rpb2_3"/>
    <property type="match status" value="1"/>
</dbReference>
<dbReference type="Pfam" id="PF10385">
    <property type="entry name" value="RNA_pol_Rpb2_45"/>
    <property type="match status" value="1"/>
</dbReference>
<dbReference type="Pfam" id="PF00562">
    <property type="entry name" value="RNA_pol_Rpb2_6"/>
    <property type="match status" value="1"/>
</dbReference>
<dbReference type="Pfam" id="PF04560">
    <property type="entry name" value="RNA_pol_Rpb2_7"/>
    <property type="match status" value="1"/>
</dbReference>
<dbReference type="SUPFAM" id="SSF64484">
    <property type="entry name" value="beta and beta-prime subunits of DNA dependent RNA-polymerase"/>
    <property type="match status" value="1"/>
</dbReference>
<dbReference type="PROSITE" id="PS01166">
    <property type="entry name" value="RNA_POL_BETA"/>
    <property type="match status" value="1"/>
</dbReference>
<gene>
    <name evidence="1" type="primary">rpoB</name>
    <name type="ordered locus">APL_1727</name>
</gene>
<proteinExistence type="inferred from homology"/>
<protein>
    <recommendedName>
        <fullName evidence="1">DNA-directed RNA polymerase subunit beta</fullName>
        <shortName evidence="1">RNAP subunit beta</shortName>
        <ecNumber evidence="1">2.7.7.6</ecNumber>
    </recommendedName>
    <alternativeName>
        <fullName evidence="1">RNA polymerase subunit beta</fullName>
    </alternativeName>
    <alternativeName>
        <fullName evidence="1">Transcriptase subunit beta</fullName>
    </alternativeName>
</protein>